<organism>
    <name type="scientific">Vibrio parahaemolyticus serotype O3:K6 (strain RIMD 2210633)</name>
    <dbReference type="NCBI Taxonomy" id="223926"/>
    <lineage>
        <taxon>Bacteria</taxon>
        <taxon>Pseudomonadati</taxon>
        <taxon>Pseudomonadota</taxon>
        <taxon>Gammaproteobacteria</taxon>
        <taxon>Vibrionales</taxon>
        <taxon>Vibrionaceae</taxon>
        <taxon>Vibrio</taxon>
    </lineage>
</organism>
<gene>
    <name evidence="1" type="primary">fabV1</name>
    <name type="ordered locus">VP1231</name>
</gene>
<feature type="chain" id="PRO_0000220054" description="Enoyl-[acyl-carrier-protein] reductase [NADH] 1">
    <location>
        <begin position="1"/>
        <end position="400"/>
    </location>
</feature>
<feature type="active site" description="Proton donor" evidence="1">
    <location>
        <position position="235"/>
    </location>
</feature>
<feature type="binding site" evidence="1">
    <location>
        <begin position="48"/>
        <end position="53"/>
    </location>
    <ligand>
        <name>NAD(+)</name>
        <dbReference type="ChEBI" id="CHEBI:57540"/>
    </ligand>
</feature>
<feature type="binding site" evidence="1">
    <location>
        <begin position="74"/>
        <end position="75"/>
    </location>
    <ligand>
        <name>NAD(+)</name>
        <dbReference type="ChEBI" id="CHEBI:57540"/>
    </ligand>
</feature>
<feature type="binding site" evidence="1">
    <location>
        <begin position="111"/>
        <end position="112"/>
    </location>
    <ligand>
        <name>NAD(+)</name>
        <dbReference type="ChEBI" id="CHEBI:57540"/>
    </ligand>
</feature>
<feature type="binding site" evidence="1">
    <location>
        <begin position="139"/>
        <end position="140"/>
    </location>
    <ligand>
        <name>NAD(+)</name>
        <dbReference type="ChEBI" id="CHEBI:57540"/>
    </ligand>
</feature>
<feature type="binding site" evidence="1">
    <location>
        <position position="225"/>
    </location>
    <ligand>
        <name>substrate</name>
    </ligand>
</feature>
<feature type="binding site" evidence="1">
    <location>
        <position position="244"/>
    </location>
    <ligand>
        <name>NAD(+)</name>
        <dbReference type="ChEBI" id="CHEBI:57540"/>
    </ligand>
</feature>
<feature type="binding site" evidence="1">
    <location>
        <begin position="273"/>
        <end position="275"/>
    </location>
    <ligand>
        <name>NAD(+)</name>
        <dbReference type="ChEBI" id="CHEBI:57540"/>
    </ligand>
</feature>
<feature type="site" description="Plays an important role in discriminating NADH against NADPH" evidence="1">
    <location>
        <position position="75"/>
    </location>
</feature>
<evidence type="ECO:0000255" key="1">
    <source>
        <dbReference type="HAMAP-Rule" id="MF_01838"/>
    </source>
</evidence>
<reference key="1">
    <citation type="journal article" date="2003" name="Lancet">
        <title>Genome sequence of Vibrio parahaemolyticus: a pathogenic mechanism distinct from that of V. cholerae.</title>
        <authorList>
            <person name="Makino K."/>
            <person name="Oshima K."/>
            <person name="Kurokawa K."/>
            <person name="Yokoyama K."/>
            <person name="Uda T."/>
            <person name="Tagomori K."/>
            <person name="Iijima Y."/>
            <person name="Najima M."/>
            <person name="Nakano M."/>
            <person name="Yamashita A."/>
            <person name="Kubota Y."/>
            <person name="Kimura S."/>
            <person name="Yasunaga T."/>
            <person name="Honda T."/>
            <person name="Shinagawa H."/>
            <person name="Hattori M."/>
            <person name="Iida T."/>
        </authorList>
    </citation>
    <scope>NUCLEOTIDE SEQUENCE [LARGE SCALE GENOMIC DNA]</scope>
    <source>
        <strain>RIMD 2210633</strain>
    </source>
</reference>
<keyword id="KW-0275">Fatty acid biosynthesis</keyword>
<keyword id="KW-0276">Fatty acid metabolism</keyword>
<keyword id="KW-0444">Lipid biosynthesis</keyword>
<keyword id="KW-0443">Lipid metabolism</keyword>
<keyword id="KW-0520">NAD</keyword>
<keyword id="KW-0560">Oxidoreductase</keyword>
<name>FABV1_VIBPA</name>
<dbReference type="EC" id="1.3.1.9" evidence="1"/>
<dbReference type="EMBL" id="BA000031">
    <property type="protein sequence ID" value="BAC59494.1"/>
    <property type="molecule type" value="Genomic_DNA"/>
</dbReference>
<dbReference type="RefSeq" id="NP_797610.1">
    <property type="nucleotide sequence ID" value="NC_004603.1"/>
</dbReference>
<dbReference type="SMR" id="Q87QB9"/>
<dbReference type="DNASU" id="1188736"/>
<dbReference type="GeneID" id="1188736"/>
<dbReference type="KEGG" id="vpa:VP1231"/>
<dbReference type="PATRIC" id="fig|223926.6.peg.1171"/>
<dbReference type="eggNOG" id="COG3007">
    <property type="taxonomic scope" value="Bacteria"/>
</dbReference>
<dbReference type="HOGENOM" id="CLU_057698_1_0_6"/>
<dbReference type="UniPathway" id="UPA00094"/>
<dbReference type="Proteomes" id="UP000002493">
    <property type="component" value="Chromosome 1"/>
</dbReference>
<dbReference type="GO" id="GO:0004318">
    <property type="term" value="F:enoyl-[acyl-carrier-protein] reductase (NADH) activity"/>
    <property type="evidence" value="ECO:0007669"/>
    <property type="project" value="UniProtKB-UniRule"/>
</dbReference>
<dbReference type="GO" id="GO:0051287">
    <property type="term" value="F:NAD binding"/>
    <property type="evidence" value="ECO:0007669"/>
    <property type="project" value="UniProtKB-UniRule"/>
</dbReference>
<dbReference type="GO" id="GO:0050343">
    <property type="term" value="F:trans-2-enoyl-CoA reductase (NADH) activity"/>
    <property type="evidence" value="ECO:0007669"/>
    <property type="project" value="TreeGrafter"/>
</dbReference>
<dbReference type="GO" id="GO:0006633">
    <property type="term" value="P:fatty acid biosynthetic process"/>
    <property type="evidence" value="ECO:0007669"/>
    <property type="project" value="UniProtKB-UniRule"/>
</dbReference>
<dbReference type="FunFam" id="3.40.50.720:FF:000221">
    <property type="entry name" value="Enoyl-[acyl-carrier-protein] reductase [NADH]"/>
    <property type="match status" value="1"/>
</dbReference>
<dbReference type="Gene3D" id="3.40.50.720">
    <property type="entry name" value="NAD(P)-binding Rossmann-like Domain"/>
    <property type="match status" value="1"/>
</dbReference>
<dbReference type="HAMAP" id="MF_01838">
    <property type="entry name" value="FabV_reductase"/>
    <property type="match status" value="1"/>
</dbReference>
<dbReference type="InterPro" id="IPR024906">
    <property type="entry name" value="Eno_Rdtase_FAD-bd_dom"/>
</dbReference>
<dbReference type="InterPro" id="IPR024910">
    <property type="entry name" value="Enoyl-CoA_Rdtase_cat_dom"/>
</dbReference>
<dbReference type="InterPro" id="IPR050048">
    <property type="entry name" value="FabV-like_NADH_b"/>
</dbReference>
<dbReference type="InterPro" id="IPR010758">
    <property type="entry name" value="Trans-2-enoyl-CoA_reductase"/>
</dbReference>
<dbReference type="NCBIfam" id="NF043048">
    <property type="entry name" value="EnoyACPredFabV"/>
    <property type="match status" value="1"/>
</dbReference>
<dbReference type="NCBIfam" id="NF010177">
    <property type="entry name" value="PRK13656.1"/>
    <property type="match status" value="1"/>
</dbReference>
<dbReference type="PANTHER" id="PTHR37480">
    <property type="entry name" value="ENOYL-[ACYL-CARRIER-PROTEIN] REDUCTASE [NADH]"/>
    <property type="match status" value="1"/>
</dbReference>
<dbReference type="PANTHER" id="PTHR37480:SF1">
    <property type="entry name" value="ENOYL-[ACYL-CARRIER-PROTEIN] REDUCTASE [NADH]"/>
    <property type="match status" value="1"/>
</dbReference>
<dbReference type="Pfam" id="PF07055">
    <property type="entry name" value="Eno-Rase_FAD_bd"/>
    <property type="match status" value="1"/>
</dbReference>
<dbReference type="Pfam" id="PF12242">
    <property type="entry name" value="Eno-Rase_NADH_b"/>
    <property type="match status" value="1"/>
</dbReference>
<dbReference type="Pfam" id="PF12241">
    <property type="entry name" value="Enoyl_reductase"/>
    <property type="match status" value="1"/>
</dbReference>
<proteinExistence type="inferred from homology"/>
<comment type="function">
    <text evidence="1">Involved in the final reduction of the elongation cycle of fatty acid synthesis (FAS II). Catalyzes the reduction of a carbon-carbon double bond in an enoyl moiety that is covalently linked to an acyl carrier protein (ACP).</text>
</comment>
<comment type="catalytic activity">
    <reaction evidence="1">
        <text>a 2,3-saturated acyl-[ACP] + NAD(+) = a (2E)-enoyl-[ACP] + NADH + H(+)</text>
        <dbReference type="Rhea" id="RHEA:10240"/>
        <dbReference type="Rhea" id="RHEA-COMP:9925"/>
        <dbReference type="Rhea" id="RHEA-COMP:9926"/>
        <dbReference type="ChEBI" id="CHEBI:15378"/>
        <dbReference type="ChEBI" id="CHEBI:57540"/>
        <dbReference type="ChEBI" id="CHEBI:57945"/>
        <dbReference type="ChEBI" id="CHEBI:78784"/>
        <dbReference type="ChEBI" id="CHEBI:78785"/>
        <dbReference type="EC" id="1.3.1.9"/>
    </reaction>
</comment>
<comment type="pathway">
    <text evidence="1">Lipid metabolism; fatty acid biosynthesis.</text>
</comment>
<comment type="subunit">
    <text evidence="1">Monomer.</text>
</comment>
<comment type="similarity">
    <text evidence="1">Belongs to the TER reductase family.</text>
</comment>
<sequence>MIIKPRIRGFICTTTHPVGCEANVKEQIAYTKAQGPIKNAPKRVLVVGASSGYGLSSRIAAAFGGGASTIGVFFEKEGTEKKPGTAGFYNAAAFEKLAREEGLYAKSLNGDAFSNEAKQKTIDLIKEDLGQVDMVVYSLASPVRKMPETGELIRSALKPIGETYTSTAVDTNKDVIIEASVEPATEEEIKDTVTVMGGEDWELWINALSDAGVLAEGCKTVAYSYIGTELTWPIYWDGALGKAKMDLDRAAKALNEKLGATGGSANVAVLKSVVTQASSAIPVMPLYIAMVFKKMREEGVHEGCMEQIYRMFSQRLYKEDGSAAEVDDMNRLRLDDWELREDIQQHCRELWPQITTENLKELTDYVEYKEEFLKLFGFGVEGVDYEADVNPAVETDFIQI</sequence>
<protein>
    <recommendedName>
        <fullName evidence="1">Enoyl-[acyl-carrier-protein] reductase [NADH] 1</fullName>
        <shortName evidence="1">ENR 1</shortName>
        <ecNumber evidence="1">1.3.1.9</ecNumber>
    </recommendedName>
</protein>
<accession>Q87QB9</accession>